<feature type="chain" id="PRO_1000096226" description="Elongation factor P">
    <location>
        <begin position="1"/>
        <end position="188"/>
    </location>
</feature>
<feature type="modified residue" description="N6-(3,6-diaminohexanoyl)-5-hydroxylysine" evidence="1">
    <location>
        <position position="34"/>
    </location>
</feature>
<comment type="function">
    <text evidence="1">Involved in peptide bond synthesis. Alleviates ribosome stalling that occurs when 3 or more consecutive Pro residues or the sequence PPG is present in a protein, possibly by augmenting the peptidyl transferase activity of the ribosome. Modification of Lys-34 is required for alleviation.</text>
</comment>
<comment type="pathway">
    <text evidence="1">Protein biosynthesis; polypeptide chain elongation.</text>
</comment>
<comment type="subcellular location">
    <subcellularLocation>
        <location evidence="1">Cytoplasm</location>
    </subcellularLocation>
</comment>
<comment type="PTM">
    <text evidence="1">May be beta-lysylated on the epsilon-amino group of Lys-34 by the combined action of EpmA and EpmB, and then hydroxylated on the C5 position of the same residue by EpmC (if this protein is present). Lysylation is critical for the stimulatory effect of EF-P on peptide-bond formation. The lysylation moiety may extend toward the peptidyltransferase center and stabilize the terminal 3-CCA end of the tRNA. Hydroxylation of the C5 position on Lys-34 may allow additional potential stabilizing hydrogen-bond interactions with the P-tRNA.</text>
</comment>
<comment type="similarity">
    <text evidence="1">Belongs to the elongation factor P family.</text>
</comment>
<gene>
    <name evidence="1" type="primary">efp</name>
    <name type="ordered locus">XfasM23_1576</name>
</gene>
<dbReference type="EMBL" id="CP001011">
    <property type="protein sequence ID" value="ACB92984.1"/>
    <property type="molecule type" value="Genomic_DNA"/>
</dbReference>
<dbReference type="RefSeq" id="WP_004086027.1">
    <property type="nucleotide sequence ID" value="NC_010577.1"/>
</dbReference>
<dbReference type="SMR" id="B2I707"/>
<dbReference type="GeneID" id="93905313"/>
<dbReference type="KEGG" id="xfn:XfasM23_1576"/>
<dbReference type="HOGENOM" id="CLU_074944_0_0_6"/>
<dbReference type="UniPathway" id="UPA00345"/>
<dbReference type="Proteomes" id="UP000001698">
    <property type="component" value="Chromosome"/>
</dbReference>
<dbReference type="GO" id="GO:0005737">
    <property type="term" value="C:cytoplasm"/>
    <property type="evidence" value="ECO:0007669"/>
    <property type="project" value="UniProtKB-SubCell"/>
</dbReference>
<dbReference type="GO" id="GO:0003746">
    <property type="term" value="F:translation elongation factor activity"/>
    <property type="evidence" value="ECO:0007669"/>
    <property type="project" value="UniProtKB-UniRule"/>
</dbReference>
<dbReference type="GO" id="GO:0043043">
    <property type="term" value="P:peptide biosynthetic process"/>
    <property type="evidence" value="ECO:0007669"/>
    <property type="project" value="InterPro"/>
</dbReference>
<dbReference type="CDD" id="cd04470">
    <property type="entry name" value="S1_EF-P_repeat_1"/>
    <property type="match status" value="1"/>
</dbReference>
<dbReference type="CDD" id="cd05794">
    <property type="entry name" value="S1_EF-P_repeat_2"/>
    <property type="match status" value="1"/>
</dbReference>
<dbReference type="FunFam" id="2.30.30.30:FF:000003">
    <property type="entry name" value="Elongation factor P"/>
    <property type="match status" value="1"/>
</dbReference>
<dbReference type="FunFam" id="2.40.50.140:FF:000004">
    <property type="entry name" value="Elongation factor P"/>
    <property type="match status" value="1"/>
</dbReference>
<dbReference type="FunFam" id="2.40.50.140:FF:000009">
    <property type="entry name" value="Elongation factor P"/>
    <property type="match status" value="1"/>
</dbReference>
<dbReference type="Gene3D" id="2.30.30.30">
    <property type="match status" value="1"/>
</dbReference>
<dbReference type="Gene3D" id="2.40.50.140">
    <property type="entry name" value="Nucleic acid-binding proteins"/>
    <property type="match status" value="2"/>
</dbReference>
<dbReference type="HAMAP" id="MF_00141">
    <property type="entry name" value="EF_P"/>
    <property type="match status" value="1"/>
</dbReference>
<dbReference type="InterPro" id="IPR015365">
    <property type="entry name" value="Elong-fact-P_C"/>
</dbReference>
<dbReference type="InterPro" id="IPR012340">
    <property type="entry name" value="NA-bd_OB-fold"/>
</dbReference>
<dbReference type="InterPro" id="IPR014722">
    <property type="entry name" value="Rib_uL2_dom2"/>
</dbReference>
<dbReference type="InterPro" id="IPR020599">
    <property type="entry name" value="Transl_elong_fac_P/YeiP"/>
</dbReference>
<dbReference type="InterPro" id="IPR013185">
    <property type="entry name" value="Transl_elong_KOW-like"/>
</dbReference>
<dbReference type="InterPro" id="IPR001059">
    <property type="entry name" value="Transl_elong_P/YeiP_cen"/>
</dbReference>
<dbReference type="InterPro" id="IPR013852">
    <property type="entry name" value="Transl_elong_P/YeiP_CS"/>
</dbReference>
<dbReference type="InterPro" id="IPR011768">
    <property type="entry name" value="Transl_elongation_fac_P"/>
</dbReference>
<dbReference type="InterPro" id="IPR008991">
    <property type="entry name" value="Translation_prot_SH3-like_sf"/>
</dbReference>
<dbReference type="NCBIfam" id="TIGR00038">
    <property type="entry name" value="efp"/>
    <property type="match status" value="1"/>
</dbReference>
<dbReference type="NCBIfam" id="NF001810">
    <property type="entry name" value="PRK00529.1"/>
    <property type="match status" value="1"/>
</dbReference>
<dbReference type="PANTHER" id="PTHR30053">
    <property type="entry name" value="ELONGATION FACTOR P"/>
    <property type="match status" value="1"/>
</dbReference>
<dbReference type="PANTHER" id="PTHR30053:SF12">
    <property type="entry name" value="ELONGATION FACTOR P (EF-P) FAMILY PROTEIN"/>
    <property type="match status" value="1"/>
</dbReference>
<dbReference type="Pfam" id="PF01132">
    <property type="entry name" value="EFP"/>
    <property type="match status" value="1"/>
</dbReference>
<dbReference type="Pfam" id="PF08207">
    <property type="entry name" value="EFP_N"/>
    <property type="match status" value="1"/>
</dbReference>
<dbReference type="Pfam" id="PF09285">
    <property type="entry name" value="Elong-fact-P_C"/>
    <property type="match status" value="1"/>
</dbReference>
<dbReference type="PIRSF" id="PIRSF005901">
    <property type="entry name" value="EF-P"/>
    <property type="match status" value="1"/>
</dbReference>
<dbReference type="SMART" id="SM01185">
    <property type="entry name" value="EFP"/>
    <property type="match status" value="1"/>
</dbReference>
<dbReference type="SMART" id="SM00841">
    <property type="entry name" value="Elong-fact-P_C"/>
    <property type="match status" value="1"/>
</dbReference>
<dbReference type="SUPFAM" id="SSF50249">
    <property type="entry name" value="Nucleic acid-binding proteins"/>
    <property type="match status" value="2"/>
</dbReference>
<dbReference type="SUPFAM" id="SSF50104">
    <property type="entry name" value="Translation proteins SH3-like domain"/>
    <property type="match status" value="1"/>
</dbReference>
<dbReference type="PROSITE" id="PS01275">
    <property type="entry name" value="EFP"/>
    <property type="match status" value="1"/>
</dbReference>
<organism>
    <name type="scientific">Xylella fastidiosa (strain M23)</name>
    <dbReference type="NCBI Taxonomy" id="405441"/>
    <lineage>
        <taxon>Bacteria</taxon>
        <taxon>Pseudomonadati</taxon>
        <taxon>Pseudomonadota</taxon>
        <taxon>Gammaproteobacteria</taxon>
        <taxon>Lysobacterales</taxon>
        <taxon>Lysobacteraceae</taxon>
        <taxon>Xylella</taxon>
    </lineage>
</organism>
<reference key="1">
    <citation type="journal article" date="2010" name="J. Bacteriol.">
        <title>Whole genome sequences of two Xylella fastidiosa strains (M12 and M23) causing almond leaf scorch disease in California.</title>
        <authorList>
            <person name="Chen J."/>
            <person name="Xie G."/>
            <person name="Han S."/>
            <person name="Chertkov O."/>
            <person name="Sims D."/>
            <person name="Civerolo E.L."/>
        </authorList>
    </citation>
    <scope>NUCLEOTIDE SEQUENCE [LARGE SCALE GENOMIC DNA]</scope>
    <source>
        <strain>M23</strain>
    </source>
</reference>
<proteinExistence type="inferred from homology"/>
<evidence type="ECO:0000255" key="1">
    <source>
        <dbReference type="HAMAP-Rule" id="MF_00141"/>
    </source>
</evidence>
<keyword id="KW-0963">Cytoplasm</keyword>
<keyword id="KW-0251">Elongation factor</keyword>
<keyword id="KW-0379">Hydroxylation</keyword>
<keyword id="KW-0648">Protein biosynthesis</keyword>
<sequence>MASYGMNDVKNGMKILVNAEPAVITDTEYVKPGKGQAFTRVKYRLIKSGRVQEVTMKSTDTLEAADVVDTDMQYLYSDGEYWHFMQQETFEQVQADKNGMGGAEKWLKGEEQCVVTLWNGVPIGVQPPNFVELKITETDPGLRGDTSGGGGKPATLETGAVVRVPLFVNQDEVIKVDTRSGEYVSRVK</sequence>
<accession>B2I707</accession>
<protein>
    <recommendedName>
        <fullName evidence="1">Elongation factor P</fullName>
        <shortName evidence="1">EF-P</shortName>
    </recommendedName>
</protein>
<name>EFP_XYLF2</name>